<reference key="1">
    <citation type="journal article" date="1997" name="Appl. Environ. Microbiol.">
        <title>A novel competence gene, comP, is essential for natural transformation of Acinetobacter sp. strain BD413.</title>
        <authorList>
            <person name="Porstendorfer D."/>
            <person name="Drotschmann U."/>
            <person name="Averhoff B."/>
        </authorList>
    </citation>
    <scope>NUCLEOTIDE SEQUENCE [GENOMIC DNA]</scope>
    <scope>FUNCTION</scope>
    <scope>DISRUPTION PHENOTYPE</scope>
    <source>
        <strain>ATCC 33305 / BD413 / ADP1</strain>
    </source>
</reference>
<reference key="2">
    <citation type="journal article" date="2004" name="Nucleic Acids Res.">
        <title>Unique features revealed by the genome sequence of Acinetobacter sp. ADP1, a versatile and naturally transformation competent bacterium.</title>
        <authorList>
            <person name="Barbe V."/>
            <person name="Vallenet D."/>
            <person name="Fonknechten N."/>
            <person name="Kreimeyer A."/>
            <person name="Oztas S."/>
            <person name="Labarre L."/>
            <person name="Cruveiller S."/>
            <person name="Robert C."/>
            <person name="Duprat S."/>
            <person name="Wincker P."/>
            <person name="Ornston L.N."/>
            <person name="Weissenbach J."/>
            <person name="Marliere P."/>
            <person name="Cohen G.N."/>
            <person name="Medigue C."/>
        </authorList>
    </citation>
    <scope>NUCLEOTIDE SEQUENCE [LARGE SCALE GENOMIC DNA]</scope>
    <source>
        <strain>ATCC 33305 / BD413 / ADP1</strain>
    </source>
</reference>
<reference key="3">
    <citation type="journal article" date="2000" name="J. Bacteriol.">
        <title>ComP, a pilin-like protein essential for natural competence in Acinetobacter sp. strain BD413: regulation, modification, and cellular localization.</title>
        <authorList>
            <person name="Porstendoerfer D."/>
            <person name="Gohl O."/>
            <person name="Mayer F."/>
            <person name="Averhoff B."/>
        </authorList>
    </citation>
    <scope>FUNCTION</scope>
    <scope>GLYCOSYLATION</scope>
    <scope>SUBCELLULAR LOCATION</scope>
    <scope>INDUCTION</scope>
    <source>
        <strain>ATCC 33305 / BD413 / ADP1</strain>
    </source>
</reference>
<reference key="4">
    <citation type="journal article" date="2013" name="PLoS ONE">
        <title>Identification of bacterial protein O-oligosaccharyltransferases and their glycoprotein substrates.</title>
        <authorList>
            <person name="Schulz B.L."/>
            <person name="Jen F.E."/>
            <person name="Power P.M."/>
            <person name="Jones C.E."/>
            <person name="Fox K.L."/>
            <person name="Ku S.C."/>
            <person name="Blanchfield J.T."/>
            <person name="Jennings M.P."/>
        </authorList>
    </citation>
    <scope>GLYCOSYLATION</scope>
    <source>
        <strain>ATCC 33305 / BD413 / ADP1</strain>
    </source>
</reference>
<evidence type="ECO:0000255" key="1">
    <source>
        <dbReference type="PROSITE-ProRule" id="PRU01070"/>
    </source>
</evidence>
<evidence type="ECO:0000269" key="2">
    <source>
    </source>
</evidence>
<evidence type="ECO:0000269" key="3">
    <source>
    </source>
</evidence>
<evidence type="ECO:0000269" key="4">
    <source>
    </source>
</evidence>
<evidence type="ECO:0000303" key="5">
    <source>
    </source>
</evidence>
<evidence type="ECO:0000303" key="6">
    <source>
    </source>
</evidence>
<evidence type="ECO:0000305" key="7"/>
<evidence type="ECO:0000312" key="8">
    <source>
        <dbReference type="EMBL" id="CAG70007.1"/>
    </source>
</evidence>
<dbReference type="EMBL" id="AF012550">
    <property type="protein sequence ID" value="AAC45886.1"/>
    <property type="molecule type" value="Genomic_DNA"/>
</dbReference>
<dbReference type="EMBL" id="CR543861">
    <property type="protein sequence ID" value="CAG70007.1"/>
    <property type="molecule type" value="Genomic_DNA"/>
</dbReference>
<dbReference type="RefSeq" id="WP_004923779.1">
    <property type="nucleotide sequence ID" value="NC_005966.1"/>
</dbReference>
<dbReference type="SMR" id="O30583"/>
<dbReference type="STRING" id="202950.GCA_001485005_02178"/>
<dbReference type="GeneID" id="45235535"/>
<dbReference type="KEGG" id="aci:ACIAD3338"/>
<dbReference type="eggNOG" id="COG4969">
    <property type="taxonomic scope" value="Bacteria"/>
</dbReference>
<dbReference type="HOGENOM" id="CLU_091705_4_0_6"/>
<dbReference type="OrthoDB" id="115249at2"/>
<dbReference type="BioCyc" id="ASP62977:ACIAD_RS15100-MONOMER"/>
<dbReference type="Proteomes" id="UP000000430">
    <property type="component" value="Chromosome"/>
</dbReference>
<dbReference type="GO" id="GO:0009279">
    <property type="term" value="C:cell outer membrane"/>
    <property type="evidence" value="ECO:0007669"/>
    <property type="project" value="UniProtKB-SubCell"/>
</dbReference>
<dbReference type="GO" id="GO:0042597">
    <property type="term" value="C:periplasmic space"/>
    <property type="evidence" value="ECO:0007669"/>
    <property type="project" value="UniProtKB-SubCell"/>
</dbReference>
<dbReference type="GO" id="GO:0009289">
    <property type="term" value="C:pilus"/>
    <property type="evidence" value="ECO:0007669"/>
    <property type="project" value="InterPro"/>
</dbReference>
<dbReference type="GO" id="GO:0005886">
    <property type="term" value="C:plasma membrane"/>
    <property type="evidence" value="ECO:0007669"/>
    <property type="project" value="UniProtKB-SubCell"/>
</dbReference>
<dbReference type="GO" id="GO:0003677">
    <property type="term" value="F:DNA binding"/>
    <property type="evidence" value="ECO:0007669"/>
    <property type="project" value="UniProtKB-KW"/>
</dbReference>
<dbReference type="GO" id="GO:0007155">
    <property type="term" value="P:cell adhesion"/>
    <property type="evidence" value="ECO:0007669"/>
    <property type="project" value="InterPro"/>
</dbReference>
<dbReference type="GO" id="GO:0030420">
    <property type="term" value="P:establishment of competence for transformation"/>
    <property type="evidence" value="ECO:0007669"/>
    <property type="project" value="UniProtKB-KW"/>
</dbReference>
<dbReference type="Gene3D" id="3.30.700.10">
    <property type="entry name" value="Glycoprotein, Type 4 Pilin"/>
    <property type="match status" value="1"/>
</dbReference>
<dbReference type="InterPro" id="IPR012902">
    <property type="entry name" value="N_methyl_site"/>
</dbReference>
<dbReference type="InterPro" id="IPR001082">
    <property type="entry name" value="Pilin"/>
</dbReference>
<dbReference type="InterPro" id="IPR045584">
    <property type="entry name" value="Pilin-like"/>
</dbReference>
<dbReference type="InterPro" id="IPR050470">
    <property type="entry name" value="T4P/T2SS_Core"/>
</dbReference>
<dbReference type="NCBIfam" id="TIGR02532">
    <property type="entry name" value="IV_pilin_GFxxxE"/>
    <property type="match status" value="1"/>
</dbReference>
<dbReference type="PANTHER" id="PTHR30093">
    <property type="entry name" value="GENERAL SECRETION PATHWAY PROTEIN G"/>
    <property type="match status" value="1"/>
</dbReference>
<dbReference type="PANTHER" id="PTHR30093:SF34">
    <property type="entry name" value="PREPILIN PEPTIDASE-DEPENDENT PROTEIN D"/>
    <property type="match status" value="1"/>
</dbReference>
<dbReference type="Pfam" id="PF07963">
    <property type="entry name" value="N_methyl"/>
    <property type="match status" value="1"/>
</dbReference>
<dbReference type="Pfam" id="PF00114">
    <property type="entry name" value="Pilin"/>
    <property type="match status" value="1"/>
</dbReference>
<dbReference type="SUPFAM" id="SSF54523">
    <property type="entry name" value="Pili subunits"/>
    <property type="match status" value="1"/>
</dbReference>
<dbReference type="PROSITE" id="PS00409">
    <property type="entry name" value="PROKAR_NTER_METHYL"/>
    <property type="match status" value="1"/>
</dbReference>
<proteinExistence type="evidence at protein level"/>
<sequence length="147" mass="14872">MNAQKGFTLIELMIVIAIIGILAAIAIPAYTDYTVRARVSEGLTAASSMKTTVSENILNAGALVAGTPSTAGSSCVGVQEISASNATTNVATATCGASSAGQIIVTMDTTKAKGANITLTPTYASGAVTWKCTTTSDKKYVPSECRG</sequence>
<gene>
    <name evidence="6" type="primary">comP</name>
    <name evidence="8" type="ordered locus">ACIAD3338</name>
</gene>
<protein>
    <recommendedName>
        <fullName evidence="5">Pilin-like competence factor ComP</fullName>
    </recommendedName>
</protein>
<organism>
    <name type="scientific">Acinetobacter baylyi (strain ATCC 33305 / BD413 / ADP1)</name>
    <dbReference type="NCBI Taxonomy" id="62977"/>
    <lineage>
        <taxon>Bacteria</taxon>
        <taxon>Pseudomonadati</taxon>
        <taxon>Pseudomonadota</taxon>
        <taxon>Gammaproteobacteria</taxon>
        <taxon>Moraxellales</taxon>
        <taxon>Moraxellaceae</taxon>
        <taxon>Acinetobacter</taxon>
    </lineage>
</organism>
<keyword id="KW-0997">Cell inner membrane</keyword>
<keyword id="KW-1003">Cell membrane</keyword>
<keyword id="KW-0998">Cell outer membrane</keyword>
<keyword id="KW-0178">Competence</keyword>
<keyword id="KW-0238">DNA-binding</keyword>
<keyword id="KW-0325">Glycoprotein</keyword>
<keyword id="KW-0472">Membrane</keyword>
<keyword id="KW-0488">Methylation</keyword>
<keyword id="KW-0574">Periplasm</keyword>
<comment type="function">
    <text evidence="2 4">Pilin-like competence factor, which is essential for natural transformation of the Gram-negative soil bacterium A.baylyi ADP1. Is not a subunit of the pilus structures. Likely functions as a major subunit of an oligomeric structure acting as a channel or pore mediating DNA translocation through the outer membrane and periplasm.</text>
</comment>
<comment type="subcellular location">
    <subcellularLocation>
        <location evidence="2">Cell inner membrane</location>
    </subcellularLocation>
    <subcellularLocation>
        <location evidence="2">Periplasm</location>
    </subcellularLocation>
    <subcellularLocation>
        <location evidence="2">Cell outer membrane</location>
    </subcellularLocation>
    <text evidence="2">The 20-kDa form is present in the cytoplasmic membrane, the periplasm, and the outer membrane, whereas the 23-kDa form is located in the outer membrane and might be due to a further modification.</text>
</comment>
<comment type="induction">
    <text evidence="2">Is maximally expressed in the late stationary growth phase (at protein and mRNA level). Minimal comP expression levels are detected in the middle of the logarithmic growth phase.</text>
</comment>
<comment type="PTM">
    <text evidence="2 3">Glycosylated by PglL2 (PubMed:23658772). The 20-kDa form is glycosylated; a 23-kDa form also exists, that might be due to a further modification. The glycosylation of ComP is not required for its function in DNA binding and uptake (PubMed:10850981).</text>
</comment>
<comment type="disruption phenotype">
    <text evidence="4">A deletion of comP completely abolishes natural transformation, due to a complete lack of DNA binding and, therefore, uptake of DNA, but has no effect on piliation and on twitching motility.</text>
</comment>
<comment type="similarity">
    <text evidence="7">Belongs to the N-Me-Phe pilin family.</text>
</comment>
<name>COMP_ACIAD</name>
<feature type="propeptide" id="PRO_0000433788" evidence="1">
    <location>
        <begin position="1"/>
        <end position="6"/>
    </location>
</feature>
<feature type="chain" id="PRO_0000433789" description="Pilin-like competence factor ComP">
    <location>
        <begin position="7"/>
        <end position="147"/>
    </location>
</feature>
<feature type="modified residue" description="N-methylphenylalanine" evidence="1">
    <location>
        <position position="7"/>
    </location>
</feature>
<accession>O30583</accession>
<accession>Q6F7F8</accession>